<protein>
    <recommendedName>
        <fullName>Rhodopsin kinase GRK7</fullName>
        <ecNumber evidence="3">2.7.11.14</ecNumber>
    </recommendedName>
    <alternativeName>
        <fullName>G protein-coupled receptor kinase 7</fullName>
    </alternativeName>
    <alternativeName>
        <fullName>G protein-coupled receptor kinase GRK7</fullName>
    </alternativeName>
</protein>
<reference key="1">
    <citation type="journal article" date="2001" name="J. Neurosci.">
        <title>Species-specific differences in expression of G-protein-coupled receptor kinase (GRK) 7 and GRK1 in mammalian cone photoreceptor cells: implications for cone cell phototransduction.</title>
        <authorList>
            <person name="Weiss E.R."/>
            <person name="Ducceschi M.H."/>
            <person name="Horner T.J."/>
            <person name="Li A."/>
            <person name="Craft C.M."/>
            <person name="Osawa S."/>
        </authorList>
    </citation>
    <scope>NUCLEOTIDE SEQUENCE [MRNA]</scope>
    <source>
        <tissue>Retina</tissue>
    </source>
</reference>
<reference key="2">
    <citation type="journal article" date="2008" name="J. Neurochem.">
        <title>Phosphorylation of GRK7 by PKA in cone photoreceptor cells is regulated by light.</title>
        <authorList>
            <person name="Osawa S."/>
            <person name="Jo R."/>
            <person name="Weiss E.R."/>
        </authorList>
    </citation>
    <scope>PHOSPHORYLATION AT SER-36</scope>
</reference>
<dbReference type="EC" id="2.7.11.14" evidence="3"/>
<dbReference type="EMBL" id="AF282270">
    <property type="protein sequence ID" value="AAL33881.1"/>
    <property type="molecule type" value="mRNA"/>
</dbReference>
<dbReference type="RefSeq" id="NP_999212.1">
    <property type="nucleotide sequence ID" value="NM_214047.1"/>
</dbReference>
<dbReference type="RefSeq" id="XP_013837535.1">
    <property type="nucleotide sequence ID" value="XM_013982081.1"/>
</dbReference>
<dbReference type="SMR" id="Q8WP15"/>
<dbReference type="FunCoup" id="Q8WP15">
    <property type="interactions" value="119"/>
</dbReference>
<dbReference type="STRING" id="9823.ENSSSCP00000012443"/>
<dbReference type="iPTMnet" id="Q8WP15"/>
<dbReference type="PaxDb" id="9823-ENSSSCP00000012443"/>
<dbReference type="PeptideAtlas" id="Q8WP15"/>
<dbReference type="Ensembl" id="ENSSSCT00000012780.2">
    <property type="protein sequence ID" value="ENSSSCP00000012443.1"/>
    <property type="gene ID" value="ENSSSCG00000011675.3"/>
</dbReference>
<dbReference type="Ensembl" id="ENSSSCT00015006654.1">
    <property type="protein sequence ID" value="ENSSSCP00015002743.1"/>
    <property type="gene ID" value="ENSSSCG00015004956.1"/>
</dbReference>
<dbReference type="Ensembl" id="ENSSSCT00025076955.1">
    <property type="protein sequence ID" value="ENSSSCP00025033347.1"/>
    <property type="gene ID" value="ENSSSCG00025056254.1"/>
</dbReference>
<dbReference type="Ensembl" id="ENSSSCT00035106501.1">
    <property type="protein sequence ID" value="ENSSSCP00035045890.1"/>
    <property type="gene ID" value="ENSSSCG00035078026.1"/>
</dbReference>
<dbReference type="Ensembl" id="ENSSSCT00040007048.1">
    <property type="protein sequence ID" value="ENSSSCP00040002796.1"/>
    <property type="gene ID" value="ENSSSCG00040005326.1"/>
</dbReference>
<dbReference type="Ensembl" id="ENSSSCT00045052245.1">
    <property type="protein sequence ID" value="ENSSSCP00045036343.1"/>
    <property type="gene ID" value="ENSSSCG00045030654.1"/>
</dbReference>
<dbReference type="Ensembl" id="ENSSSCT00050021081.1">
    <property type="protein sequence ID" value="ENSSSCP00050008793.1"/>
    <property type="gene ID" value="ENSSSCG00050015584.1"/>
</dbReference>
<dbReference type="Ensembl" id="ENSSSCT00055051399.1">
    <property type="protein sequence ID" value="ENSSSCP00055041084.1"/>
    <property type="gene ID" value="ENSSSCG00055026023.1"/>
</dbReference>
<dbReference type="Ensembl" id="ENSSSCT00065020048.1">
    <property type="protein sequence ID" value="ENSSSCP00065008159.1"/>
    <property type="gene ID" value="ENSSSCG00065015051.1"/>
</dbReference>
<dbReference type="Ensembl" id="ENSSSCT00070014972.1">
    <property type="protein sequence ID" value="ENSSSCP00070012391.1"/>
    <property type="gene ID" value="ENSSSCG00070007747.1"/>
</dbReference>
<dbReference type="Ensembl" id="ENSSSCT00090058091">
    <property type="protein sequence ID" value="ENSSSCP00090036191"/>
    <property type="gene ID" value="ENSSSCG00090032877"/>
</dbReference>
<dbReference type="Ensembl" id="ENSSSCT00105009870">
    <property type="protein sequence ID" value="ENSSSCP00105007222"/>
    <property type="gene ID" value="ENSSSCG00105004946"/>
</dbReference>
<dbReference type="Ensembl" id="ENSSSCT00110004409">
    <property type="protein sequence ID" value="ENSSSCP00110003348"/>
    <property type="gene ID" value="ENSSSCG00110002191"/>
</dbReference>
<dbReference type="Ensembl" id="ENSSSCT00130030761">
    <property type="protein sequence ID" value="ENSSSCP00130021489"/>
    <property type="gene ID" value="ENSSSCG00130015497"/>
</dbReference>
<dbReference type="GeneID" id="397114"/>
<dbReference type="KEGG" id="ssc:397114"/>
<dbReference type="CTD" id="131890"/>
<dbReference type="VGNC" id="VGNC:88699">
    <property type="gene designation" value="GRK7"/>
</dbReference>
<dbReference type="eggNOG" id="KOG0986">
    <property type="taxonomic scope" value="Eukaryota"/>
</dbReference>
<dbReference type="GeneTree" id="ENSGT00940000160511"/>
<dbReference type="HOGENOM" id="CLU_000288_63_41_1"/>
<dbReference type="InParanoid" id="Q8WP15"/>
<dbReference type="OMA" id="YFTEFRV"/>
<dbReference type="OrthoDB" id="354826at2759"/>
<dbReference type="TreeFam" id="TF313940"/>
<dbReference type="Reactome" id="R-SSC-2514859">
    <property type="pathway name" value="Inactivation, recovery and regulation of the phototransduction cascade"/>
</dbReference>
<dbReference type="Proteomes" id="UP000008227">
    <property type="component" value="Chromosome 13"/>
</dbReference>
<dbReference type="Proteomes" id="UP000314985">
    <property type="component" value="Chromosome 13"/>
</dbReference>
<dbReference type="Proteomes" id="UP000694570">
    <property type="component" value="Unplaced"/>
</dbReference>
<dbReference type="Proteomes" id="UP000694571">
    <property type="component" value="Unplaced"/>
</dbReference>
<dbReference type="Proteomes" id="UP000694720">
    <property type="component" value="Unplaced"/>
</dbReference>
<dbReference type="Proteomes" id="UP000694722">
    <property type="component" value="Unplaced"/>
</dbReference>
<dbReference type="Proteomes" id="UP000694723">
    <property type="component" value="Unplaced"/>
</dbReference>
<dbReference type="Proteomes" id="UP000694724">
    <property type="component" value="Unplaced"/>
</dbReference>
<dbReference type="Proteomes" id="UP000694725">
    <property type="component" value="Unplaced"/>
</dbReference>
<dbReference type="Proteomes" id="UP000694726">
    <property type="component" value="Unplaced"/>
</dbReference>
<dbReference type="Proteomes" id="UP000694727">
    <property type="component" value="Unplaced"/>
</dbReference>
<dbReference type="Proteomes" id="UP000694728">
    <property type="component" value="Unplaced"/>
</dbReference>
<dbReference type="Bgee" id="ENSSSCG00000011675">
    <property type="expression patterns" value="Expressed in oocyte and 17 other cell types or tissues"/>
</dbReference>
<dbReference type="GO" id="GO:0005737">
    <property type="term" value="C:cytoplasm"/>
    <property type="evidence" value="ECO:0000318"/>
    <property type="project" value="GO_Central"/>
</dbReference>
<dbReference type="GO" id="GO:0016020">
    <property type="term" value="C:membrane"/>
    <property type="evidence" value="ECO:0007669"/>
    <property type="project" value="UniProtKB-SubCell"/>
</dbReference>
<dbReference type="GO" id="GO:0005524">
    <property type="term" value="F:ATP binding"/>
    <property type="evidence" value="ECO:0007669"/>
    <property type="project" value="UniProtKB-KW"/>
</dbReference>
<dbReference type="GO" id="GO:0050254">
    <property type="term" value="F:rhodopsin kinase activity"/>
    <property type="evidence" value="ECO:0000250"/>
    <property type="project" value="UniProtKB"/>
</dbReference>
<dbReference type="GO" id="GO:0009966">
    <property type="term" value="P:regulation of signal transduction"/>
    <property type="evidence" value="ECO:0000318"/>
    <property type="project" value="GO_Central"/>
</dbReference>
<dbReference type="GO" id="GO:0007165">
    <property type="term" value="P:signal transduction"/>
    <property type="evidence" value="ECO:0007669"/>
    <property type="project" value="InterPro"/>
</dbReference>
<dbReference type="GO" id="GO:0007601">
    <property type="term" value="P:visual perception"/>
    <property type="evidence" value="ECO:0007669"/>
    <property type="project" value="UniProtKB-KW"/>
</dbReference>
<dbReference type="CDD" id="cd05607">
    <property type="entry name" value="STKc_GRK7"/>
    <property type="match status" value="1"/>
</dbReference>
<dbReference type="FunFam" id="1.10.167.10:FF:000027">
    <property type="entry name" value="G protein-coupled receptor kinase"/>
    <property type="match status" value="1"/>
</dbReference>
<dbReference type="FunFam" id="1.10.510.10:FF:000074">
    <property type="entry name" value="G protein-coupled receptor kinase"/>
    <property type="match status" value="1"/>
</dbReference>
<dbReference type="Gene3D" id="3.30.200.20">
    <property type="entry name" value="Phosphorylase Kinase, domain 1"/>
    <property type="match status" value="1"/>
</dbReference>
<dbReference type="Gene3D" id="1.10.167.10">
    <property type="entry name" value="Regulator of G-protein Signalling 4, domain 2"/>
    <property type="match status" value="1"/>
</dbReference>
<dbReference type="Gene3D" id="1.10.510.10">
    <property type="entry name" value="Transferase(Phosphotransferase) domain 1"/>
    <property type="match status" value="1"/>
</dbReference>
<dbReference type="InterPro" id="IPR000961">
    <property type="entry name" value="AGC-kinase_C"/>
</dbReference>
<dbReference type="InterPro" id="IPR000239">
    <property type="entry name" value="GPCR_kinase"/>
</dbReference>
<dbReference type="InterPro" id="IPR011009">
    <property type="entry name" value="Kinase-like_dom_sf"/>
</dbReference>
<dbReference type="InterPro" id="IPR000719">
    <property type="entry name" value="Prot_kinase_dom"/>
</dbReference>
<dbReference type="InterPro" id="IPR017441">
    <property type="entry name" value="Protein_kinase_ATP_BS"/>
</dbReference>
<dbReference type="InterPro" id="IPR016137">
    <property type="entry name" value="RGS"/>
</dbReference>
<dbReference type="InterPro" id="IPR036305">
    <property type="entry name" value="RGS_sf"/>
</dbReference>
<dbReference type="InterPro" id="IPR044926">
    <property type="entry name" value="RGS_subdomain_2"/>
</dbReference>
<dbReference type="InterPro" id="IPR008271">
    <property type="entry name" value="Ser/Thr_kinase_AS"/>
</dbReference>
<dbReference type="PANTHER" id="PTHR24355">
    <property type="entry name" value="G PROTEIN-COUPLED RECEPTOR KINASE/RIBOSOMAL PROTEIN S6 KINASE"/>
    <property type="match status" value="1"/>
</dbReference>
<dbReference type="PANTHER" id="PTHR24355:SF12">
    <property type="entry name" value="RHODOPSIN KINASE GRK7"/>
    <property type="match status" value="1"/>
</dbReference>
<dbReference type="Pfam" id="PF00069">
    <property type="entry name" value="Pkinase"/>
    <property type="match status" value="1"/>
</dbReference>
<dbReference type="Pfam" id="PF00615">
    <property type="entry name" value="RGS"/>
    <property type="match status" value="1"/>
</dbReference>
<dbReference type="PRINTS" id="PR00717">
    <property type="entry name" value="GPCRKINASE"/>
</dbReference>
<dbReference type="SMART" id="SM00315">
    <property type="entry name" value="RGS"/>
    <property type="match status" value="1"/>
</dbReference>
<dbReference type="SMART" id="SM00220">
    <property type="entry name" value="S_TKc"/>
    <property type="match status" value="1"/>
</dbReference>
<dbReference type="SUPFAM" id="SSF56112">
    <property type="entry name" value="Protein kinase-like (PK-like)"/>
    <property type="match status" value="1"/>
</dbReference>
<dbReference type="SUPFAM" id="SSF48097">
    <property type="entry name" value="Regulator of G-protein signaling, RGS"/>
    <property type="match status" value="1"/>
</dbReference>
<dbReference type="PROSITE" id="PS51285">
    <property type="entry name" value="AGC_KINASE_CTER"/>
    <property type="match status" value="1"/>
</dbReference>
<dbReference type="PROSITE" id="PS00107">
    <property type="entry name" value="PROTEIN_KINASE_ATP"/>
    <property type="match status" value="1"/>
</dbReference>
<dbReference type="PROSITE" id="PS50011">
    <property type="entry name" value="PROTEIN_KINASE_DOM"/>
    <property type="match status" value="1"/>
</dbReference>
<dbReference type="PROSITE" id="PS00108">
    <property type="entry name" value="PROTEIN_KINASE_ST"/>
    <property type="match status" value="1"/>
</dbReference>
<dbReference type="PROSITE" id="PS50132">
    <property type="entry name" value="RGS"/>
    <property type="match status" value="1"/>
</dbReference>
<comment type="function">
    <text evidence="3">Retina-specific kinase involved in the shutoff of the photoresponse and adaptation to changing light conditions via cone opsin phosphorylation, including rhodopsin (RHO).</text>
</comment>
<comment type="catalytic activity">
    <reaction evidence="3">
        <text>L-threonyl-[rhodopsin] + ATP = O-phospho-L-threonyl-[rhodopsin] + ADP + H(+)</text>
        <dbReference type="Rhea" id="RHEA:56552"/>
        <dbReference type="Rhea" id="RHEA-COMP:14596"/>
        <dbReference type="Rhea" id="RHEA-COMP:14597"/>
        <dbReference type="ChEBI" id="CHEBI:15378"/>
        <dbReference type="ChEBI" id="CHEBI:30013"/>
        <dbReference type="ChEBI" id="CHEBI:30616"/>
        <dbReference type="ChEBI" id="CHEBI:61977"/>
        <dbReference type="ChEBI" id="CHEBI:456216"/>
        <dbReference type="EC" id="2.7.11.14"/>
    </reaction>
</comment>
<comment type="catalytic activity">
    <reaction evidence="3">
        <text>L-seryl-[rhodopsin] + ATP = O-phospho-L-seryl-[rhodopsin] + ADP + H(+)</text>
        <dbReference type="Rhea" id="RHEA:23356"/>
        <dbReference type="Rhea" id="RHEA-COMP:14594"/>
        <dbReference type="Rhea" id="RHEA-COMP:14595"/>
        <dbReference type="ChEBI" id="CHEBI:15378"/>
        <dbReference type="ChEBI" id="CHEBI:29999"/>
        <dbReference type="ChEBI" id="CHEBI:30616"/>
        <dbReference type="ChEBI" id="CHEBI:83421"/>
        <dbReference type="ChEBI" id="CHEBI:456216"/>
        <dbReference type="EC" id="2.7.11.14"/>
    </reaction>
</comment>
<comment type="activity regulation">
    <text evidence="1">Inhibited by phosphorylation of Ser-36.</text>
</comment>
<comment type="subunit">
    <text evidence="2">Interacts (when prenylated) with PDE6D; this promotes release from membranes.</text>
</comment>
<comment type="subcellular location">
    <subcellularLocation>
        <location evidence="2">Membrane</location>
        <topology evidence="2">Lipid-anchor</topology>
    </subcellularLocation>
</comment>
<comment type="PTM">
    <text evidence="1 9">Autophosphorylated in vitro at Ser-490 (By similarity). Phosphorylation at Ser-36 is regulated by light and activated by cAMP.</text>
</comment>
<comment type="miscellaneous">
    <text>Although the protein is present in a diversity of vertebrates ranging from bony fish to mammals, the mouse and rat orthologous proteins do not exist.</text>
</comment>
<comment type="similarity">
    <text evidence="10">Belongs to the protein kinase superfamily. AGC Ser/Thr protein kinase family. GPRK subfamily.</text>
</comment>
<evidence type="ECO:0000250" key="1"/>
<evidence type="ECO:0000250" key="2">
    <source>
        <dbReference type="UniProtKB" id="Q8WMV0"/>
    </source>
</evidence>
<evidence type="ECO:0000250" key="3">
    <source>
        <dbReference type="UniProtKB" id="Q8WTQ7"/>
    </source>
</evidence>
<evidence type="ECO:0000255" key="4"/>
<evidence type="ECO:0000255" key="5">
    <source>
        <dbReference type="PROSITE-ProRule" id="PRU00159"/>
    </source>
</evidence>
<evidence type="ECO:0000255" key="6">
    <source>
        <dbReference type="PROSITE-ProRule" id="PRU00171"/>
    </source>
</evidence>
<evidence type="ECO:0000255" key="7">
    <source>
        <dbReference type="PROSITE-ProRule" id="PRU00618"/>
    </source>
</evidence>
<evidence type="ECO:0000255" key="8">
    <source>
        <dbReference type="PROSITE-ProRule" id="PRU10027"/>
    </source>
</evidence>
<evidence type="ECO:0000269" key="9">
    <source>
    </source>
</evidence>
<evidence type="ECO:0000305" key="10"/>
<feature type="chain" id="PRO_0000024334" description="Rhodopsin kinase GRK7">
    <location>
        <begin position="1"/>
        <end position="550"/>
    </location>
</feature>
<feature type="propeptide" id="PRO_0000024335" description="Removed in mature form" evidence="1">
    <location>
        <begin position="551"/>
        <end position="553"/>
    </location>
</feature>
<feature type="domain" description="RGS" evidence="6">
    <location>
        <begin position="56"/>
        <end position="176"/>
    </location>
</feature>
<feature type="domain" description="Protein kinase" evidence="5">
    <location>
        <begin position="191"/>
        <end position="454"/>
    </location>
</feature>
<feature type="domain" description="AGC-kinase C-terminal" evidence="7">
    <location>
        <begin position="455"/>
        <end position="520"/>
    </location>
</feature>
<feature type="active site" description="Proton acceptor" evidence="5 8">
    <location>
        <position position="316"/>
    </location>
</feature>
<feature type="binding site" evidence="5">
    <location>
        <begin position="197"/>
        <end position="205"/>
    </location>
    <ligand>
        <name>ATP</name>
        <dbReference type="ChEBI" id="CHEBI:30616"/>
    </ligand>
</feature>
<feature type="binding site" evidence="5">
    <location>
        <position position="220"/>
    </location>
    <ligand>
        <name>ATP</name>
        <dbReference type="ChEBI" id="CHEBI:30616"/>
    </ligand>
</feature>
<feature type="modified residue" description="Phosphoserine; by PKA" evidence="9">
    <location>
        <position position="36"/>
    </location>
</feature>
<feature type="modified residue" description="Cysteine methyl ester" evidence="4">
    <location>
        <position position="550"/>
    </location>
</feature>
<feature type="lipid moiety-binding region" description="S-geranylgeranyl cysteine" evidence="4">
    <location>
        <position position="550"/>
    </location>
</feature>
<name>GRK7_PIG</name>
<gene>
    <name type="primary">GRK7</name>
</gene>
<sequence length="553" mass="62299">MVDMGGLDNLIANTAYLQARKTSDADSKELQRRRRSLMLPGPQSCEQLRQAMPADFNSLCEQQPIGRRLFRDFLATVPAYQEAMGFLEEVQSWELAEEGPAKGSTLQALVATCAVAPNPGQPHSFLSPALVTKCQAATTDEERASLVEQAKAEAMAFLQDQPFREFLVSPFYDKFLQWKVFEMQPVSDKYFEEFRVLGKGGFGEVCAVQVKNTGKMYACKKLDKKRLKKKSGEKMALSEKEILEKVSSPFVVSLAYAFESKSHLCLVMSLMNGGDLKFHIYSVGERGLDMNRVIFYSAQMTCGVLHLHSLGIVYRDLKPENVLLDDLGNCRLSDLGLAVQIQDGKPVTQRAGTNGYMAPEILMEKASYSYPVDWFAMGCSIYEMVAGRTPFKDYKEKISKEDLKQRTLKEEVRFQHQSFTEEAKDICRLFLAKTPEQRLGSREKSDDPRKHHFFKTINFPRLEAGLVDPPFVPDPSVVYAKDVDEIEDFSEVRGVEFDDKDKQFFQRFATGAVPIAWQEEIIETGLFEELNDPNRPAGCGEGNSSRSGVCLLL</sequence>
<proteinExistence type="evidence at protein level"/>
<keyword id="KW-0067">ATP-binding</keyword>
<keyword id="KW-0418">Kinase</keyword>
<keyword id="KW-0449">Lipoprotein</keyword>
<keyword id="KW-0472">Membrane</keyword>
<keyword id="KW-0488">Methylation</keyword>
<keyword id="KW-0547">Nucleotide-binding</keyword>
<keyword id="KW-0597">Phosphoprotein</keyword>
<keyword id="KW-0636">Prenylation</keyword>
<keyword id="KW-1185">Reference proteome</keyword>
<keyword id="KW-0716">Sensory transduction</keyword>
<keyword id="KW-0723">Serine/threonine-protein kinase</keyword>
<keyword id="KW-0808">Transferase</keyword>
<keyword id="KW-0844">Vision</keyword>
<organism>
    <name type="scientific">Sus scrofa</name>
    <name type="common">Pig</name>
    <dbReference type="NCBI Taxonomy" id="9823"/>
    <lineage>
        <taxon>Eukaryota</taxon>
        <taxon>Metazoa</taxon>
        <taxon>Chordata</taxon>
        <taxon>Craniata</taxon>
        <taxon>Vertebrata</taxon>
        <taxon>Euteleostomi</taxon>
        <taxon>Mammalia</taxon>
        <taxon>Eutheria</taxon>
        <taxon>Laurasiatheria</taxon>
        <taxon>Artiodactyla</taxon>
        <taxon>Suina</taxon>
        <taxon>Suidae</taxon>
        <taxon>Sus</taxon>
    </lineage>
</organism>
<accession>Q8WP15</accession>